<name>NR2F6_RAT</name>
<sequence length="390" mass="41730">MAMVTGGWGGPGGDTNGVDKAGGSYPRATEDDSASPPGATSDAEPGDEERPGLQVDCVVCGDKSSGKHYGVFTCEGCKSFFKRTIRRNLSYTCRSNRDCQIDQHHRNQCQYCRLKKCFRVGMRKEAVQPGPIPHALPGPAACSPPGAAGVEPFAGPPVSELIAQLLRAEPYPAAGRFGGGGAVLGIDNVCELAARLLFSTVEWARHAPFFPELPAADQVGLLRLSWSELFVLNAAQAPVPLHTAPLLAAAGLHAGPMAAERAVAFMDQVRAFQEQVDKLGRLQVDAAEYGCLKAIALFTPDACGLSDPAHVESLQEKAQVALTEYVRAQYPSQPQRFGRLLLRLPALRAVPASLISQLFFMRLVGKTPIETLIRDMLLSGSTFNWPYGSG</sequence>
<gene>
    <name type="primary">Nr2f6</name>
    <name type="synonym">Ear2</name>
    <name type="synonym">Erbal2</name>
</gene>
<reference key="1">
    <citation type="submission" date="1997-05" db="EMBL/GenBank/DDBJ databases">
        <title>Cloning and expression of COUPb and COUPg in the rat anterior pituitary.</title>
        <authorList>
            <person name="Boutin J.-M."/>
            <person name="Ronsin B."/>
            <person name="Devost D."/>
            <person name="Lipkin S.M."/>
            <person name="Rosenfeld M.G."/>
            <person name="Morel G."/>
        </authorList>
    </citation>
    <scope>NUCLEOTIDE SEQUENCE [MRNA]</scope>
    <source>
        <tissue>Pituitary</tissue>
    </source>
</reference>
<reference key="2">
    <citation type="journal article" date="1997" name="J. Mol. Endocrinol.">
        <title>The nuclear orphan receptors COUP-TFII and Ear-2 act as silencers of the human oxytocin gene promoter.</title>
        <authorList>
            <person name="Chu K."/>
            <person name="Zingg H.H."/>
        </authorList>
    </citation>
    <scope>FUNCTION</scope>
</reference>
<proteinExistence type="evidence at transcript level"/>
<organism>
    <name type="scientific">Rattus norvegicus</name>
    <name type="common">Rat</name>
    <dbReference type="NCBI Taxonomy" id="10116"/>
    <lineage>
        <taxon>Eukaryota</taxon>
        <taxon>Metazoa</taxon>
        <taxon>Chordata</taxon>
        <taxon>Craniata</taxon>
        <taxon>Vertebrata</taxon>
        <taxon>Euteleostomi</taxon>
        <taxon>Mammalia</taxon>
        <taxon>Eutheria</taxon>
        <taxon>Euarchontoglires</taxon>
        <taxon>Glires</taxon>
        <taxon>Rodentia</taxon>
        <taxon>Myomorpha</taxon>
        <taxon>Muroidea</taxon>
        <taxon>Muridae</taxon>
        <taxon>Murinae</taxon>
        <taxon>Rattus</taxon>
    </lineage>
</organism>
<dbReference type="EMBL" id="AF003926">
    <property type="protein sequence ID" value="AAB61296.1"/>
    <property type="molecule type" value="mRNA"/>
</dbReference>
<dbReference type="RefSeq" id="NP_620813.1">
    <property type="nucleotide sequence ID" value="NM_139113.1"/>
</dbReference>
<dbReference type="SMR" id="O09017"/>
<dbReference type="FunCoup" id="O09017">
    <property type="interactions" value="52"/>
</dbReference>
<dbReference type="STRING" id="10116.ENSRNOP00000022898"/>
<dbReference type="PhosphoSitePlus" id="O09017"/>
<dbReference type="PaxDb" id="10116-ENSRNOP00000022898"/>
<dbReference type="GeneID" id="245980"/>
<dbReference type="KEGG" id="rno:245980"/>
<dbReference type="UCSC" id="RGD:621685">
    <property type="organism name" value="rat"/>
</dbReference>
<dbReference type="AGR" id="RGD:621685"/>
<dbReference type="CTD" id="2063"/>
<dbReference type="RGD" id="621685">
    <property type="gene designation" value="Nr2f6"/>
</dbReference>
<dbReference type="eggNOG" id="KOG3575">
    <property type="taxonomic scope" value="Eukaryota"/>
</dbReference>
<dbReference type="InParanoid" id="O09017"/>
<dbReference type="PhylomeDB" id="O09017"/>
<dbReference type="Reactome" id="R-RNO-383280">
    <property type="pathway name" value="Nuclear Receptor transcription pathway"/>
</dbReference>
<dbReference type="PRO" id="PR:O09017"/>
<dbReference type="Proteomes" id="UP000002494">
    <property type="component" value="Unplaced"/>
</dbReference>
<dbReference type="GO" id="GO:0005634">
    <property type="term" value="C:nucleus"/>
    <property type="evidence" value="ECO:0000266"/>
    <property type="project" value="RGD"/>
</dbReference>
<dbReference type="GO" id="GO:0003700">
    <property type="term" value="F:DNA-binding transcription factor activity"/>
    <property type="evidence" value="ECO:0000314"/>
    <property type="project" value="UniProtKB"/>
</dbReference>
<dbReference type="GO" id="GO:0001227">
    <property type="term" value="F:DNA-binding transcription repressor activity, RNA polymerase II-specific"/>
    <property type="evidence" value="ECO:0000266"/>
    <property type="project" value="RGD"/>
</dbReference>
<dbReference type="GO" id="GO:0004879">
    <property type="term" value="F:nuclear receptor activity"/>
    <property type="evidence" value="ECO:0000318"/>
    <property type="project" value="GO_Central"/>
</dbReference>
<dbReference type="GO" id="GO:0000978">
    <property type="term" value="F:RNA polymerase II cis-regulatory region sequence-specific DNA binding"/>
    <property type="evidence" value="ECO:0000266"/>
    <property type="project" value="RGD"/>
</dbReference>
<dbReference type="GO" id="GO:0043565">
    <property type="term" value="F:sequence-specific DNA binding"/>
    <property type="evidence" value="ECO:0000314"/>
    <property type="project" value="UniProtKB"/>
</dbReference>
<dbReference type="GO" id="GO:1990837">
    <property type="term" value="F:sequence-specific double-stranded DNA binding"/>
    <property type="evidence" value="ECO:0000266"/>
    <property type="project" value="RGD"/>
</dbReference>
<dbReference type="GO" id="GO:0008270">
    <property type="term" value="F:zinc ion binding"/>
    <property type="evidence" value="ECO:0007669"/>
    <property type="project" value="UniProtKB-KW"/>
</dbReference>
<dbReference type="GO" id="GO:0030154">
    <property type="term" value="P:cell differentiation"/>
    <property type="evidence" value="ECO:0000318"/>
    <property type="project" value="GO_Central"/>
</dbReference>
<dbReference type="GO" id="GO:0050965">
    <property type="term" value="P:detection of temperature stimulus involved in sensory perception of pain"/>
    <property type="evidence" value="ECO:0000266"/>
    <property type="project" value="RGD"/>
</dbReference>
<dbReference type="GO" id="GO:0043153">
    <property type="term" value="P:entrainment of circadian clock by photoperiod"/>
    <property type="evidence" value="ECO:0000266"/>
    <property type="project" value="RGD"/>
</dbReference>
<dbReference type="GO" id="GO:0000122">
    <property type="term" value="P:negative regulation of transcription by RNA polymerase II"/>
    <property type="evidence" value="ECO:0000314"/>
    <property type="project" value="UniProtKB"/>
</dbReference>
<dbReference type="GO" id="GO:0007399">
    <property type="term" value="P:nervous system development"/>
    <property type="evidence" value="ECO:0000318"/>
    <property type="project" value="GO_Central"/>
</dbReference>
<dbReference type="GO" id="GO:0048666">
    <property type="term" value="P:neuron development"/>
    <property type="evidence" value="ECO:0000266"/>
    <property type="project" value="RGD"/>
</dbReference>
<dbReference type="CDD" id="cd06958">
    <property type="entry name" value="NR_DBD_COUP_TF"/>
    <property type="match status" value="1"/>
</dbReference>
<dbReference type="CDD" id="cd06948">
    <property type="entry name" value="NR_LBD_COUP-TF"/>
    <property type="match status" value="1"/>
</dbReference>
<dbReference type="FunFam" id="3.30.50.10:FF:000016">
    <property type="entry name" value="Nuclear receptor subfamily 2 group F member 1"/>
    <property type="match status" value="1"/>
</dbReference>
<dbReference type="FunFam" id="1.10.565.10:FF:000020">
    <property type="entry name" value="Nuclear receptor subfamily 2 group F member 6"/>
    <property type="match status" value="1"/>
</dbReference>
<dbReference type="Gene3D" id="3.30.50.10">
    <property type="entry name" value="Erythroid Transcription Factor GATA-1, subunit A"/>
    <property type="match status" value="1"/>
</dbReference>
<dbReference type="Gene3D" id="1.10.565.10">
    <property type="entry name" value="Retinoid X Receptor"/>
    <property type="match status" value="1"/>
</dbReference>
<dbReference type="InterPro" id="IPR035500">
    <property type="entry name" value="NHR-like_dom_sf"/>
</dbReference>
<dbReference type="InterPro" id="IPR000536">
    <property type="entry name" value="Nucl_hrmn_rcpt_lig-bd"/>
</dbReference>
<dbReference type="InterPro" id="IPR050274">
    <property type="entry name" value="Nuclear_hormone_rcpt_NR2"/>
</dbReference>
<dbReference type="InterPro" id="IPR001723">
    <property type="entry name" value="Nuclear_hrmn_rcpt"/>
</dbReference>
<dbReference type="InterPro" id="IPR001628">
    <property type="entry name" value="Znf_hrmn_rcpt"/>
</dbReference>
<dbReference type="InterPro" id="IPR013088">
    <property type="entry name" value="Znf_NHR/GATA"/>
</dbReference>
<dbReference type="PANTHER" id="PTHR24083">
    <property type="entry name" value="NUCLEAR HORMONE RECEPTOR"/>
    <property type="match status" value="1"/>
</dbReference>
<dbReference type="Pfam" id="PF00104">
    <property type="entry name" value="Hormone_recep"/>
    <property type="match status" value="1"/>
</dbReference>
<dbReference type="Pfam" id="PF00105">
    <property type="entry name" value="zf-C4"/>
    <property type="match status" value="1"/>
</dbReference>
<dbReference type="PRINTS" id="PR01282">
    <property type="entry name" value="COUPTNFACTOR"/>
</dbReference>
<dbReference type="PRINTS" id="PR00398">
    <property type="entry name" value="STRDHORMONER"/>
</dbReference>
<dbReference type="PRINTS" id="PR00047">
    <property type="entry name" value="STROIDFINGER"/>
</dbReference>
<dbReference type="SMART" id="SM00430">
    <property type="entry name" value="HOLI"/>
    <property type="match status" value="1"/>
</dbReference>
<dbReference type="SMART" id="SM00399">
    <property type="entry name" value="ZnF_C4"/>
    <property type="match status" value="1"/>
</dbReference>
<dbReference type="SUPFAM" id="SSF57716">
    <property type="entry name" value="Glucocorticoid receptor-like (DNA-binding domain)"/>
    <property type="match status" value="1"/>
</dbReference>
<dbReference type="SUPFAM" id="SSF48508">
    <property type="entry name" value="Nuclear receptor ligand-binding domain"/>
    <property type="match status" value="1"/>
</dbReference>
<dbReference type="PROSITE" id="PS51843">
    <property type="entry name" value="NR_LBD"/>
    <property type="match status" value="1"/>
</dbReference>
<dbReference type="PROSITE" id="PS00031">
    <property type="entry name" value="NUCLEAR_REC_DBD_1"/>
    <property type="match status" value="1"/>
</dbReference>
<dbReference type="PROSITE" id="PS51030">
    <property type="entry name" value="NUCLEAR_REC_DBD_2"/>
    <property type="match status" value="1"/>
</dbReference>
<protein>
    <recommendedName>
        <fullName>Nuclear receptor subfamily 2 group F member 6</fullName>
    </recommendedName>
    <alternativeName>
        <fullName>COUPg</fullName>
    </alternativeName>
    <alternativeName>
        <fullName>Ovalbumin upstream promoter gamma nuclear receptor</fullName>
    </alternativeName>
    <alternativeName>
        <fullName>V-erbA-related protein 2</fullName>
        <shortName>EAR-2</shortName>
    </alternativeName>
</protein>
<accession>O09017</accession>
<comment type="function">
    <text evidence="1 7">Transcription factor predominantly involved in transcriptional repression. Binds to promoter/enhancer response elements that contain the imperfect 5'-AGGTCA-3' direct or inverted repeats with various spacings which are also recognized by other nuclear hormone receptors. Involved in modulation of hormonal responses. Represses transcriptional activity of the lutropin-choriogonadotropic hormone receptor/LHCGR gene, the renin/REN gene and the oxytocin-neurophysin/OXT gene. Represses the triiodothyronine-dependent and -independent transcriptional activity of the thyroid hormone receptor gene in a cell type-specific manner. The corepressing function towards thyroid hormone receptor beta/THRB involves at least in part the inhibition of THRB binding to triiodothyronine response elements (TREs) by NR2F6. Inhibits NFATC transcription factor DNA binding and subsequently its transcriptional activity. Acts as transcriptional repressor of IL-17 expression in Th-17 differentiated CD4(+) T cells and may be involved in induction and/or maintenance of peripheral immunological tolerance and autoimmunity. Involved in development of forebrain circadian clock; is required early in the development of the locus coeruleus (LC) (By similarity).</text>
</comment>
<comment type="subunit">
    <text evidence="1">Binds DNA as dimer; homodimer and heterodimer with NR2F2 and probably NR2F1. Interacts with THRB (By similarity).</text>
</comment>
<comment type="subcellular location">
    <subcellularLocation>
        <location evidence="8">Nucleus</location>
    </subcellularLocation>
</comment>
<comment type="similarity">
    <text evidence="8">Belongs to the nuclear hormone receptor family. NR2 subfamily.</text>
</comment>
<keyword id="KW-0238">DNA-binding</keyword>
<keyword id="KW-0479">Metal-binding</keyword>
<keyword id="KW-0539">Nucleus</keyword>
<keyword id="KW-0597">Phosphoprotein</keyword>
<keyword id="KW-0675">Receptor</keyword>
<keyword id="KW-1185">Reference proteome</keyword>
<keyword id="KW-0678">Repressor</keyword>
<keyword id="KW-0804">Transcription</keyword>
<keyword id="KW-0805">Transcription regulation</keyword>
<keyword id="KW-0862">Zinc</keyword>
<keyword id="KW-0863">Zinc-finger</keyword>
<evidence type="ECO:0000250" key="1"/>
<evidence type="ECO:0000250" key="2">
    <source>
        <dbReference type="UniProtKB" id="P10588"/>
    </source>
</evidence>
<evidence type="ECO:0000250" key="3">
    <source>
        <dbReference type="UniProtKB" id="P43136"/>
    </source>
</evidence>
<evidence type="ECO:0000255" key="4">
    <source>
        <dbReference type="PROSITE-ProRule" id="PRU00407"/>
    </source>
</evidence>
<evidence type="ECO:0000255" key="5">
    <source>
        <dbReference type="PROSITE-ProRule" id="PRU01189"/>
    </source>
</evidence>
<evidence type="ECO:0000256" key="6">
    <source>
        <dbReference type="SAM" id="MobiDB-lite"/>
    </source>
</evidence>
<evidence type="ECO:0000269" key="7">
    <source>
    </source>
</evidence>
<evidence type="ECO:0000305" key="8"/>
<feature type="chain" id="PRO_0000053615" description="Nuclear receptor subfamily 2 group F member 6">
    <location>
        <begin position="1"/>
        <end position="390"/>
    </location>
</feature>
<feature type="domain" description="NR LBD" evidence="5">
    <location>
        <begin position="157"/>
        <end position="380"/>
    </location>
</feature>
<feature type="DNA-binding region" description="Nuclear receptor" evidence="4">
    <location>
        <begin position="54"/>
        <end position="129"/>
    </location>
</feature>
<feature type="zinc finger region" description="NR C4-type" evidence="4">
    <location>
        <begin position="57"/>
        <end position="77"/>
    </location>
</feature>
<feature type="zinc finger region" description="NR C4-type" evidence="4">
    <location>
        <begin position="93"/>
        <end position="117"/>
    </location>
</feature>
<feature type="region of interest" description="Disordered" evidence="6">
    <location>
        <begin position="1"/>
        <end position="50"/>
    </location>
</feature>
<feature type="region of interest" description="Important for dimerization" evidence="1">
    <location>
        <begin position="314"/>
        <end position="390"/>
    </location>
</feature>
<feature type="compositionally biased region" description="Gly residues" evidence="6">
    <location>
        <begin position="1"/>
        <end position="15"/>
    </location>
</feature>
<feature type="modified residue" description="Phosphoserine" evidence="3">
    <location>
        <position position="35"/>
    </location>
</feature>
<feature type="modified residue" description="Phosphoserine" evidence="2">
    <location>
        <position position="41"/>
    </location>
</feature>